<gene>
    <name evidence="5" type="primary">C4H</name>
</gene>
<dbReference type="EC" id="1.14.14.91" evidence="1"/>
<dbReference type="EMBL" id="MF416091">
    <property type="protein sequence ID" value="AUG71936.1"/>
    <property type="molecule type" value="mRNA"/>
</dbReference>
<dbReference type="SMR" id="A0A2H5AIX7"/>
<dbReference type="UniPathway" id="UPA00825">
    <property type="reaction ID" value="UER00789"/>
</dbReference>
<dbReference type="GO" id="GO:0016020">
    <property type="term" value="C:membrane"/>
    <property type="evidence" value="ECO:0007669"/>
    <property type="project" value="UniProtKB-SubCell"/>
</dbReference>
<dbReference type="GO" id="GO:0020037">
    <property type="term" value="F:heme binding"/>
    <property type="evidence" value="ECO:0007669"/>
    <property type="project" value="InterPro"/>
</dbReference>
<dbReference type="GO" id="GO:0005506">
    <property type="term" value="F:iron ion binding"/>
    <property type="evidence" value="ECO:0007669"/>
    <property type="project" value="InterPro"/>
</dbReference>
<dbReference type="GO" id="GO:0016710">
    <property type="term" value="F:trans-cinnamate 4-monooxygenase activity"/>
    <property type="evidence" value="ECO:0007669"/>
    <property type="project" value="UniProtKB-EC"/>
</dbReference>
<dbReference type="GO" id="GO:0009820">
    <property type="term" value="P:alkaloid metabolic process"/>
    <property type="evidence" value="ECO:0007669"/>
    <property type="project" value="UniProtKB-KW"/>
</dbReference>
<dbReference type="GO" id="GO:0009808">
    <property type="term" value="P:lignin metabolic process"/>
    <property type="evidence" value="ECO:0007669"/>
    <property type="project" value="TreeGrafter"/>
</dbReference>
<dbReference type="CDD" id="cd11074">
    <property type="entry name" value="CYP73"/>
    <property type="match status" value="1"/>
</dbReference>
<dbReference type="FunFam" id="1.10.630.10:FF:000013">
    <property type="entry name" value="Trans-cinnamate 4-monooxygenase"/>
    <property type="match status" value="1"/>
</dbReference>
<dbReference type="Gene3D" id="1.10.630.10">
    <property type="entry name" value="Cytochrome P450"/>
    <property type="match status" value="1"/>
</dbReference>
<dbReference type="InterPro" id="IPR001128">
    <property type="entry name" value="Cyt_P450"/>
</dbReference>
<dbReference type="InterPro" id="IPR017972">
    <property type="entry name" value="Cyt_P450_CS"/>
</dbReference>
<dbReference type="InterPro" id="IPR002401">
    <property type="entry name" value="Cyt_P450_E_grp-I"/>
</dbReference>
<dbReference type="InterPro" id="IPR036396">
    <property type="entry name" value="Cyt_P450_sf"/>
</dbReference>
<dbReference type="PANTHER" id="PTHR47948">
    <property type="entry name" value="TRANS-CINNAMATE 4-MONOOXYGENASE"/>
    <property type="match status" value="1"/>
</dbReference>
<dbReference type="PANTHER" id="PTHR47948:SF4">
    <property type="entry name" value="TRANS-CINNAMATE 4-MONOOXYGENASE"/>
    <property type="match status" value="1"/>
</dbReference>
<dbReference type="Pfam" id="PF00067">
    <property type="entry name" value="p450"/>
    <property type="match status" value="1"/>
</dbReference>
<dbReference type="PRINTS" id="PR00463">
    <property type="entry name" value="EP450I"/>
</dbReference>
<dbReference type="PRINTS" id="PR00385">
    <property type="entry name" value="P450"/>
</dbReference>
<dbReference type="SUPFAM" id="SSF48264">
    <property type="entry name" value="Cytochrome P450"/>
    <property type="match status" value="1"/>
</dbReference>
<dbReference type="PROSITE" id="PS00086">
    <property type="entry name" value="CYTOCHROME_P450"/>
    <property type="match status" value="1"/>
</dbReference>
<name>TCMO_NARPS</name>
<sequence length="505" mass="58018">MDLILLEKSLLAVFFAVIFSIIVSKLRGKKLKLPPGPFPVPVFGNWIQVGDDLNHRNLAGLAKKFGDIFLLRMGQRNLVVVSSPDLARDVLHTHGVEFGSRTRNVVFDIFTGKGQDMVFTVYGEHWRKMRRIMTVPFFTNKVVNQYRFGWEEEAARVVEDVKKDPMAAAEGIVLRRRLQLLMYNNMYRIMFDRRFESVDDPLFLKLTALNGERSRLAQSFEYNYGDFIPILRPFLRGYLKICKQVKERRFKLFKDYFLEERKKLASTKPTDNAGLKCAIDHILDAEKKGEINEDNVLYIVENINVAAIETTLWSIEWGIAELVNHPNVQQKLRNELDAVLGPGVQITEPDTYRLPYLQAVIKETLRLRMAIPLLVPHMNLYDAKLGSYDIPAESKILVNAWWLANNPAHWKDPQEFRPERFLEEEAKVEANGNDFRYIPFGVGRRSCPGIILALPILGITIGRLVQNFELLPPPGQDKLDTTEKGGQFSLHILKHSTIVAKPRVF</sequence>
<evidence type="ECO:0000250" key="1">
    <source>
        <dbReference type="UniProtKB" id="Q04468"/>
    </source>
</evidence>
<evidence type="ECO:0000250" key="2">
    <source>
        <dbReference type="UniProtKB" id="Q94IP1"/>
    </source>
</evidence>
<evidence type="ECO:0000255" key="3"/>
<evidence type="ECO:0000269" key="4">
    <source>
    </source>
</evidence>
<evidence type="ECO:0000303" key="5">
    <source>
    </source>
</evidence>
<evidence type="ECO:0000305" key="6"/>
<evidence type="ECO:0000305" key="7">
    <source>
    </source>
</evidence>
<comment type="function">
    <text evidence="1 7">Catalyzes the first oxidative step of the phenylpropanoid pathway in higher plants by transforming trans-cinnamate into p-coumarate (By similarity). The compounds formed by this pathway are essential components for lignification, pollination, and defense against ultraviolet light, predators and pathogens (By similarity). Trans-4-coumarate is a precursor to all amaryllidaceae alkaloids such as galanthamine, lycorine and haemanthamine, and including haemanthamine- and crinamine-type alkaloids, promising anticancer agents (Probable).</text>
</comment>
<comment type="catalytic activity">
    <reaction evidence="1">
        <text>(E)-cinnamate + reduced [NADPH--hemoprotein reductase] + O2 = (E)-4-coumarate + oxidized [NADPH--hemoprotein reductase] + H2O + H(+)</text>
        <dbReference type="Rhea" id="RHEA:10608"/>
        <dbReference type="Rhea" id="RHEA-COMP:11964"/>
        <dbReference type="Rhea" id="RHEA-COMP:11965"/>
        <dbReference type="ChEBI" id="CHEBI:12876"/>
        <dbReference type="ChEBI" id="CHEBI:15377"/>
        <dbReference type="ChEBI" id="CHEBI:15378"/>
        <dbReference type="ChEBI" id="CHEBI:15379"/>
        <dbReference type="ChEBI" id="CHEBI:15669"/>
        <dbReference type="ChEBI" id="CHEBI:57618"/>
        <dbReference type="ChEBI" id="CHEBI:58210"/>
        <dbReference type="EC" id="1.14.14.91"/>
    </reaction>
</comment>
<comment type="cofactor">
    <cofactor evidence="2">
        <name>heme</name>
        <dbReference type="ChEBI" id="CHEBI:30413"/>
    </cofactor>
</comment>
<comment type="pathway">
    <text evidence="5">Alkaloid biosynthesis.</text>
</comment>
<comment type="pathway">
    <text evidence="6">Phenylpropanoid metabolism; trans-4-coumarate biosynthesis; trans-4-coumarate from trans-cinnamate: step 1/1.</text>
</comment>
<comment type="subcellular location">
    <subcellularLocation>
        <location evidence="3">Membrane</location>
        <topology evidence="3">Single-pass membrane protein</topology>
    </subcellularLocation>
</comment>
<comment type="tissue specificity">
    <text evidence="4">Mostly expressed in stems, and, to a lower extent, in bulbs, roots, leaves and flowers.</text>
</comment>
<comment type="similarity">
    <text evidence="6">Belongs to the cytochrome P450 family.</text>
</comment>
<accession>A0A2H5AIX7</accession>
<reference key="1">
    <citation type="journal article" date="2017" name="Sci. Rep.">
        <title>Transcriptome and metabolome profiling of Narcissus pseudonarcissus 'King Alfred' reveal components of Amaryllidaceae alkaloid metabolism.</title>
        <authorList>
            <person name="Singh A."/>
            <person name="Desgagne-Penix I."/>
        </authorList>
    </citation>
    <scope>NUCLEOTIDE SEQUENCE [MRNA]</scope>
    <scope>FUNCTION</scope>
    <scope>REVIEW ON THE AMARYLLIDACEAE ALKALOID METABOLISM</scope>
    <scope>PATHWAY</scope>
    <scope>TISSUE SPECIFICITY</scope>
    <scope>GENE FAMILY</scope>
    <scope>NOMENCLATURE</scope>
    <source>
        <strain>cv. King Alfred</strain>
        <tissue>Bulb</tissue>
    </source>
</reference>
<protein>
    <recommendedName>
        <fullName evidence="6">Trans-cinnamate 4-monooxygenase</fullName>
        <ecNumber evidence="1">1.14.14.91</ecNumber>
    </recommendedName>
    <alternativeName>
        <fullName evidence="5">Cinnamic acid 4-hydroxylase</fullName>
        <shortName evidence="5">C4H</shortName>
        <shortName evidence="6">CA4H</shortName>
    </alternativeName>
    <alternativeName>
        <fullName evidence="6">Cytochrome P450 C4H</fullName>
    </alternativeName>
</protein>
<organism>
    <name type="scientific">Narcissus pseudonarcissus</name>
    <name type="common">Daffodil</name>
    <dbReference type="NCBI Taxonomy" id="39639"/>
    <lineage>
        <taxon>Eukaryota</taxon>
        <taxon>Viridiplantae</taxon>
        <taxon>Streptophyta</taxon>
        <taxon>Embryophyta</taxon>
        <taxon>Tracheophyta</taxon>
        <taxon>Spermatophyta</taxon>
        <taxon>Magnoliopsida</taxon>
        <taxon>Liliopsida</taxon>
        <taxon>Asparagales</taxon>
        <taxon>Amaryllidaceae</taxon>
        <taxon>Amaryllidoideae</taxon>
        <taxon>Narcissus</taxon>
    </lineage>
</organism>
<keyword id="KW-0017">Alkaloid metabolism</keyword>
<keyword id="KW-0349">Heme</keyword>
<keyword id="KW-0408">Iron</keyword>
<keyword id="KW-0472">Membrane</keyword>
<keyword id="KW-0479">Metal-binding</keyword>
<keyword id="KW-0503">Monooxygenase</keyword>
<keyword id="KW-0560">Oxidoreductase</keyword>
<keyword id="KW-0812">Transmembrane</keyword>
<keyword id="KW-1133">Transmembrane helix</keyword>
<feature type="chain" id="PRO_0000450633" description="Trans-cinnamate 4-monooxygenase">
    <location>
        <begin position="1"/>
        <end position="505"/>
    </location>
</feature>
<feature type="transmembrane region" description="Helical" evidence="3">
    <location>
        <begin position="3"/>
        <end position="23"/>
    </location>
</feature>
<feature type="binding site" evidence="2">
    <location>
        <begin position="213"/>
        <end position="218"/>
    </location>
    <ligand>
        <name>(E)-cinnamate</name>
        <dbReference type="ChEBI" id="CHEBI:15669"/>
    </ligand>
</feature>
<feature type="binding site" evidence="2">
    <location>
        <position position="306"/>
    </location>
    <ligand>
        <name>(E)-cinnamate</name>
        <dbReference type="ChEBI" id="CHEBI:15669"/>
    </ligand>
</feature>
<feature type="binding site" description="axial binding residue" evidence="2">
    <location>
        <position position="447"/>
    </location>
    <ligand>
        <name>heme</name>
        <dbReference type="ChEBI" id="CHEBI:30413"/>
    </ligand>
    <ligandPart>
        <name>Fe</name>
        <dbReference type="ChEBI" id="CHEBI:18248"/>
    </ligandPart>
</feature>
<proteinExistence type="evidence at transcript level"/>